<keyword id="KW-0256">Endoplasmic reticulum</keyword>
<keyword id="KW-0472">Membrane</keyword>
<keyword id="KW-1185">Reference proteome</keyword>
<keyword id="KW-0732">Signal</keyword>
<keyword id="KW-0812">Transmembrane</keyword>
<keyword id="KW-1133">Transmembrane helix</keyword>
<dbReference type="EMBL" id="BC149546">
    <property type="protein sequence ID" value="AAI49547.1"/>
    <property type="molecule type" value="mRNA"/>
</dbReference>
<dbReference type="EMBL" id="BT026285">
    <property type="protein sequence ID" value="ABG81441.1"/>
    <property type="status" value="ALT_INIT"/>
    <property type="molecule type" value="mRNA"/>
</dbReference>
<dbReference type="RefSeq" id="NP_001094543.1">
    <property type="nucleotide sequence ID" value="NM_001101073.1"/>
</dbReference>
<dbReference type="SMR" id="A6QPY0"/>
<dbReference type="FunCoup" id="A6QPY0">
    <property type="interactions" value="3646"/>
</dbReference>
<dbReference type="STRING" id="9913.ENSBTAP00000040330"/>
<dbReference type="PaxDb" id="9913-ENSBTAP00000040330"/>
<dbReference type="PeptideAtlas" id="A6QPY0"/>
<dbReference type="GeneID" id="510682"/>
<dbReference type="KEGG" id="bta:510682"/>
<dbReference type="CTD" id="1650"/>
<dbReference type="eggNOG" id="KOG2754">
    <property type="taxonomic scope" value="Eukaryota"/>
</dbReference>
<dbReference type="InParanoid" id="A6QPY0"/>
<dbReference type="OrthoDB" id="29105at2759"/>
<dbReference type="UniPathway" id="UPA00378"/>
<dbReference type="Proteomes" id="UP000009136">
    <property type="component" value="Unplaced"/>
</dbReference>
<dbReference type="GO" id="GO:0008250">
    <property type="term" value="C:oligosaccharyltransferase complex"/>
    <property type="evidence" value="ECO:0000250"/>
    <property type="project" value="UniProtKB"/>
</dbReference>
<dbReference type="GO" id="GO:0006486">
    <property type="term" value="P:protein glycosylation"/>
    <property type="evidence" value="ECO:0000250"/>
    <property type="project" value="UniProtKB"/>
</dbReference>
<dbReference type="GO" id="GO:0018279">
    <property type="term" value="P:protein N-linked glycosylation via asparagine"/>
    <property type="evidence" value="ECO:0000318"/>
    <property type="project" value="GO_Central"/>
</dbReference>
<dbReference type="InterPro" id="IPR005013">
    <property type="entry name" value="DDOST_48_kDa_subunit"/>
</dbReference>
<dbReference type="InterPro" id="IPR055459">
    <property type="entry name" value="OST48_MD"/>
</dbReference>
<dbReference type="InterPro" id="IPR055457">
    <property type="entry name" value="OST48_N"/>
</dbReference>
<dbReference type="PANTHER" id="PTHR10830">
    <property type="entry name" value="DOLICHYL-DIPHOSPHOOLIGOSACCHARIDE--PROTEIN GLYCOSYLTRANSFERASE 48 KDA SUBUNIT"/>
    <property type="match status" value="1"/>
</dbReference>
<dbReference type="PANTHER" id="PTHR10830:SF0">
    <property type="entry name" value="DOLICHYL-DIPHOSPHOOLIGOSACCHARIDE--PROTEIN GLYCOSYLTRANSFERASE 48 KDA SUBUNIT"/>
    <property type="match status" value="1"/>
</dbReference>
<dbReference type="Pfam" id="PF23358">
    <property type="entry name" value="OST48_MD"/>
    <property type="match status" value="1"/>
</dbReference>
<dbReference type="Pfam" id="PF03345">
    <property type="entry name" value="OST48_N"/>
    <property type="match status" value="1"/>
</dbReference>
<proteinExistence type="evidence at transcript level"/>
<reference key="1">
    <citation type="submission" date="2007-07" db="EMBL/GenBank/DDBJ databases">
        <authorList>
            <consortium name="NIH - Mammalian Gene Collection (MGC) project"/>
        </authorList>
    </citation>
    <scope>NUCLEOTIDE SEQUENCE [LARGE SCALE MRNA]</scope>
    <source>
        <strain>Crossbred X Angus</strain>
        <tissue>Liver</tissue>
    </source>
</reference>
<reference key="2">
    <citation type="journal article" date="2005" name="BMC Genomics">
        <title>Characterization of 954 bovine full-CDS cDNA sequences.</title>
        <authorList>
            <person name="Harhay G.P."/>
            <person name="Sonstegard T.S."/>
            <person name="Keele J.W."/>
            <person name="Heaton M.P."/>
            <person name="Clawson M.L."/>
            <person name="Snelling W.M."/>
            <person name="Wiedmann R.T."/>
            <person name="Van Tassell C.P."/>
            <person name="Smith T.P.L."/>
        </authorList>
    </citation>
    <scope>NUCLEOTIDE SEQUENCE [LARGE SCALE MRNA] OF 1-393</scope>
</reference>
<gene>
    <name evidence="2" type="primary">DDOST</name>
</gene>
<feature type="signal peptide" evidence="1">
    <location>
        <begin position="1"/>
        <end position="26"/>
    </location>
</feature>
<feature type="chain" id="PRO_0000354671" description="Dolichyl-diphosphooligosaccharide--protein glycosyltransferase 48 kDa subunit">
    <location>
        <begin position="27"/>
        <end position="439"/>
    </location>
</feature>
<feature type="topological domain" description="Lumenal" evidence="5">
    <location>
        <begin position="27"/>
        <end position="409"/>
    </location>
</feature>
<feature type="transmembrane region" description="Helical" evidence="5">
    <location>
        <begin position="410"/>
        <end position="430"/>
    </location>
</feature>
<feature type="topological domain" description="Cytoplasmic" evidence="5">
    <location>
        <begin position="431"/>
        <end position="439"/>
    </location>
</feature>
<feature type="sequence conflict" description="In Ref. 2; AAI49547." evidence="6" ref="2">
    <original>S</original>
    <variation>G</variation>
    <location>
        <position position="114"/>
    </location>
</feature>
<organism>
    <name type="scientific">Bos taurus</name>
    <name type="common">Bovine</name>
    <dbReference type="NCBI Taxonomy" id="9913"/>
    <lineage>
        <taxon>Eukaryota</taxon>
        <taxon>Metazoa</taxon>
        <taxon>Chordata</taxon>
        <taxon>Craniata</taxon>
        <taxon>Vertebrata</taxon>
        <taxon>Euteleostomi</taxon>
        <taxon>Mammalia</taxon>
        <taxon>Eutheria</taxon>
        <taxon>Laurasiatheria</taxon>
        <taxon>Artiodactyla</taxon>
        <taxon>Ruminantia</taxon>
        <taxon>Pecora</taxon>
        <taxon>Bovidae</taxon>
        <taxon>Bovinae</taxon>
        <taxon>Bos</taxon>
    </lineage>
</organism>
<name>OST48_BOVIN</name>
<sequence>MATRAARVWSGWWLLLLPLLGLAGASGPRTLVLLDNLNLRETHSLFFRSLKDRGFVLTFKTADDPSLSLIKYGEFLYDNLIIFSPSVEDFGGNINVETISAFIDGGGSVLVAASSDIGDPLRELGSECGIEFDEEKTAVIDHHNYDVSDLGQHTLIVADTENLLKAPTIVGKSSLNPILFRGVGMVADPDNPLVLDILTGSSTSYSFFPDKPITQYPHAVGKNTLLIAGLQARNNARVIFSGSLDFFSDAFFNSAVQKAAPGSQRYSQTGNYELAVALSRWVFKEEGVLRVGPVSHHRVGETAPPNAYTVTDLVEYSIVIEQLSDGKWVPFDGDDIQLEFVRIDPFVRTFLKRKGGKYSVQFKLPDVYGVFQFKVDYNRLGYTHLYSSTQVSVRPLQHTQYERFIPSAYPYYASAFSMMLGLFIFSVVFLHMKEKEKSD</sequence>
<accession>A6QPY0</accession>
<accession>Q0V8D4</accession>
<evidence type="ECO:0000250" key="1"/>
<evidence type="ECO:0000250" key="2">
    <source>
        <dbReference type="UniProtKB" id="P39656"/>
    </source>
</evidence>
<evidence type="ECO:0000250" key="3">
    <source>
        <dbReference type="UniProtKB" id="Q05052"/>
    </source>
</evidence>
<evidence type="ECO:0000250" key="4">
    <source>
        <dbReference type="UniProtKB" id="Q29381"/>
    </source>
</evidence>
<evidence type="ECO:0000255" key="5"/>
<evidence type="ECO:0000305" key="6"/>
<comment type="function">
    <text evidence="2 3">Subunit of the oligosaccharyl transferase (OST) complex that catalyzes the initial transfer of a defined glycan (Glc(3)Man(9)GlcNAc(2) in eukaryotes) from the lipid carrier dolichol-pyrophosphate to an asparagine residue within an Asn-X-Ser/Thr consensus motif in nascent polypeptide chains, the first step in protein N-glycosylation (By similarity). N-glycosylation occurs cotranslationally and the complex associates with the Sec61 complex at the channel-forming translocon complex that mediates protein translocation across the endoplasmic reticulum (ER). All subunits are required for a maximal enzyme activity (By similarity). Required for the assembly of both SST3A- and SS3B-containing OST complexes (By similarity).</text>
</comment>
<comment type="pathway">
    <text evidence="2">Protein modification; protein glycosylation.</text>
</comment>
<comment type="subunit">
    <text evidence="2 3">Component of the oligosaccharyltransferase (OST) complex (By similarity). OST exists in two different complex forms which contain common core subunits RPN1, RPN2, OST48, OST4, DAD1 and TMEM258, either STT3A or STT3B as catalytic subunits, and form-specific accessory subunits (By similarity). STT3A complex assembly occurs through the formation of 3 subcomplexes. Subcomplex 1 contains RPN1 and TMEM258, subcomplex 2 contains the STT3A-specific subunits STT3A, DC2/OSTC, and KCP2 as well as the core subunit OST4, and subcomplex 3 contains RPN2, DAD1, and OST48. The STT3A complex can form stable complexes with the Sec61 complex or with both the Sec61 and TRAP complexes. Interacts with SMIM22 (By similarity).</text>
</comment>
<comment type="subcellular location">
    <subcellularLocation>
        <location evidence="4">Endoplasmic reticulum membrane</location>
        <topology evidence="4">Single-pass type I membrane protein</topology>
    </subcellularLocation>
</comment>
<comment type="similarity">
    <text evidence="6">Belongs to the DDOST 48 kDa subunit family.</text>
</comment>
<comment type="sequence caution" evidence="6">
    <conflict type="erroneous initiation">
        <sequence resource="EMBL-CDS" id="ABG81441"/>
    </conflict>
</comment>
<protein>
    <recommendedName>
        <fullName evidence="2">Dolichyl-diphosphooligosaccharide--protein glycosyltransferase 48 kDa subunit</fullName>
        <shortName>DDOST 48 kDa subunit</shortName>
        <shortName>Oligosaccharyl transferase 48 kDa subunit</shortName>
    </recommendedName>
</protein>